<protein>
    <recommendedName>
        <fullName>Ubiquitin-like modifier-activating enzyme ATG7</fullName>
    </recommendedName>
    <alternativeName>
        <fullName>ATG12-activating enzyme E1 ATG7</fullName>
    </alternativeName>
    <alternativeName>
        <fullName>Autophagy-related protein 7</fullName>
    </alternativeName>
</protein>
<comment type="function">
    <text evidence="1">E1-like activating enzyme involved in the 2 ubiquitin-like systems required for cytoplasm to vacuole transport (Cvt) and autophagy. Activates ATG12 for its conjugation with ATG5 and ATG8 for its conjugation with phosphatidylethanolamine. Both systems are needed for the ATG8 association to Cvt vesicles and autophagosomes membranes. Autophagy is essential for maintenance of amino acid levels and protein synthesis under nitrogen starvation. Required for selective autophagic degradation of the nucleus (nucleophagy) as well as for mitophagy which contributes to regulate mitochondrial quantity and quality by eliminating the mitochondria to a basal level to fulfill cellular energy requirements and preventing excess ROS production. Plays a role in the regulation of filamentous growth and chronological longevity (By similarity).</text>
</comment>
<comment type="subunit">
    <text evidence="1">Homodimer.</text>
</comment>
<comment type="subcellular location">
    <subcellularLocation>
        <location evidence="1">Cytoplasm</location>
    </subcellularLocation>
    <subcellularLocation>
        <location evidence="1">Preautophagosomal structure</location>
    </subcellularLocation>
</comment>
<comment type="domain">
    <text evidence="1">The GxGxxG motif is important for the function, possibly through binding with ATP.</text>
</comment>
<comment type="similarity">
    <text evidence="2">Belongs to the ATG7 family.</text>
</comment>
<sequence>MSFTPFSSFLEASFFQTLAAKKLNEYKLDDSPKRVSAEYTWQQGRLVFDSDSFSDRDSHCKGVVECPGTLLNYNTIEEFKGADKKALLAEWGDKMLSGAIMNGSIFRNPEILNSFLLITFCDLKKYIFVYWMGVPCLNTKWDLQEVADEGNYTNLSTRIPALGESFVVIDPDDNVTPFSELEYVERSEDPTIAFLSPTSPENTPWTVRNICLMLHILGFKSATMILVGREKNRFLEWKRGDGELGAWTGWEKNSAGKLLPKQTNLGPLLNPLQLASQAVDLNLKLMKWRIAPELDLDTIKHTRCLLLGAGTLGSYVSRSLLAWGVEQVTFVDNGTVSFSNPVRQPLYKYVDCLDGGKPKAETAAEALKEIYPAVKTSGITLEVPMIGHSTTSSSEKRVHQQYDELVSLIKSHDAVFLLMDSRESRWLPTVICAALKKKCITAAIGFDSFVVMRHGVEGVNDLGCYFCNDVVAPTDSMNDRTLDQQCTVTRPGIAPIVSGYGVEILQAMCQDEPSAPHQLRGFLHNFSTVKITGQRFKCCSACSPVIVQEWKDKTWGFVKKALNERGFVEELCGLAELQRGVDELDFGEGEGSEEEWEM</sequence>
<dbReference type="EMBL" id="CR382129">
    <property type="protein sequence ID" value="CAG82359.1"/>
    <property type="molecule type" value="Genomic_DNA"/>
</dbReference>
<dbReference type="RefSeq" id="XP_502039.1">
    <property type="nucleotide sequence ID" value="XM_502039.1"/>
</dbReference>
<dbReference type="SMR" id="Q6CBC3"/>
<dbReference type="FunCoup" id="Q6CBC3">
    <property type="interactions" value="779"/>
</dbReference>
<dbReference type="STRING" id="284591.Q6CBC3"/>
<dbReference type="EnsemblFungi" id="CAG82359">
    <property type="protein sequence ID" value="CAG82359"/>
    <property type="gene ID" value="YALI0_C20119g"/>
</dbReference>
<dbReference type="KEGG" id="yli:2909898"/>
<dbReference type="VEuPathDB" id="FungiDB:YALI0_C20119g"/>
<dbReference type="HOGENOM" id="CLU_012998_2_1_1"/>
<dbReference type="InParanoid" id="Q6CBC3"/>
<dbReference type="OMA" id="HEFTRRK"/>
<dbReference type="OrthoDB" id="63901at4891"/>
<dbReference type="Proteomes" id="UP000001300">
    <property type="component" value="Chromosome C"/>
</dbReference>
<dbReference type="GO" id="GO:0005737">
    <property type="term" value="C:cytoplasm"/>
    <property type="evidence" value="ECO:0000318"/>
    <property type="project" value="GO_Central"/>
</dbReference>
<dbReference type="GO" id="GO:0000407">
    <property type="term" value="C:phagophore assembly site"/>
    <property type="evidence" value="ECO:0000318"/>
    <property type="project" value="GO_Central"/>
</dbReference>
<dbReference type="GO" id="GO:0019778">
    <property type="term" value="F:Atg12 activating enzyme activity"/>
    <property type="evidence" value="ECO:0000318"/>
    <property type="project" value="GO_Central"/>
</dbReference>
<dbReference type="GO" id="GO:0019779">
    <property type="term" value="F:Atg8 activating enzyme activity"/>
    <property type="evidence" value="ECO:0000318"/>
    <property type="project" value="GO_Central"/>
</dbReference>
<dbReference type="GO" id="GO:0000045">
    <property type="term" value="P:autophagosome assembly"/>
    <property type="evidence" value="ECO:0000318"/>
    <property type="project" value="GO_Central"/>
</dbReference>
<dbReference type="GO" id="GO:0006995">
    <property type="term" value="P:cellular response to nitrogen starvation"/>
    <property type="evidence" value="ECO:0000318"/>
    <property type="project" value="GO_Central"/>
</dbReference>
<dbReference type="GO" id="GO:0000423">
    <property type="term" value="P:mitophagy"/>
    <property type="evidence" value="ECO:0000318"/>
    <property type="project" value="GO_Central"/>
</dbReference>
<dbReference type="GO" id="GO:0034727">
    <property type="term" value="P:piecemeal microautophagy of the nucleus"/>
    <property type="evidence" value="ECO:0000318"/>
    <property type="project" value="GO_Central"/>
</dbReference>
<dbReference type="GO" id="GO:0032446">
    <property type="term" value="P:protein modification by small protein conjugation"/>
    <property type="evidence" value="ECO:0000318"/>
    <property type="project" value="GO_Central"/>
</dbReference>
<dbReference type="GO" id="GO:0015031">
    <property type="term" value="P:protein transport"/>
    <property type="evidence" value="ECO:0007669"/>
    <property type="project" value="UniProtKB-KW"/>
</dbReference>
<dbReference type="FunFam" id="3.40.50.720:FF:000395">
    <property type="entry name" value="ubiquitin-like modifier-activating enzyme ATG7"/>
    <property type="match status" value="1"/>
</dbReference>
<dbReference type="Gene3D" id="3.40.50.720">
    <property type="entry name" value="NAD(P)-binding Rossmann-like Domain"/>
    <property type="match status" value="1"/>
</dbReference>
<dbReference type="Gene3D" id="3.40.140.100">
    <property type="entry name" value="Ubiquitin-like modifier-activating enzyme ATG7 C-terminal domain"/>
    <property type="match status" value="1"/>
</dbReference>
<dbReference type="Gene3D" id="3.40.140.70">
    <property type="entry name" value="Ubiquitin-like modifier-activating enzyme ATG7 N-terminal domain"/>
    <property type="match status" value="1"/>
</dbReference>
<dbReference type="InterPro" id="IPR006285">
    <property type="entry name" value="Atg7"/>
</dbReference>
<dbReference type="InterPro" id="IPR032197">
    <property type="entry name" value="Atg7_N"/>
</dbReference>
<dbReference type="InterPro" id="IPR042522">
    <property type="entry name" value="Atg7_N_1"/>
</dbReference>
<dbReference type="InterPro" id="IPR042523">
    <property type="entry name" value="Atg7_N_2"/>
</dbReference>
<dbReference type="InterPro" id="IPR045886">
    <property type="entry name" value="ThiF/MoeB/HesA"/>
</dbReference>
<dbReference type="InterPro" id="IPR000594">
    <property type="entry name" value="ThiF_NAD_FAD-bd"/>
</dbReference>
<dbReference type="InterPro" id="IPR035985">
    <property type="entry name" value="Ubiquitin-activating_enz"/>
</dbReference>
<dbReference type="NCBIfam" id="TIGR01381">
    <property type="entry name" value="E1_like_apg7"/>
    <property type="match status" value="1"/>
</dbReference>
<dbReference type="PANTHER" id="PTHR10953">
    <property type="entry name" value="UBIQUITIN-ACTIVATING ENZYME E1"/>
    <property type="match status" value="1"/>
</dbReference>
<dbReference type="PANTHER" id="PTHR10953:SF3">
    <property type="entry name" value="UBIQUITIN-LIKE MODIFIER-ACTIVATING ENZYME ATG7"/>
    <property type="match status" value="1"/>
</dbReference>
<dbReference type="Pfam" id="PF16420">
    <property type="entry name" value="ATG7_N"/>
    <property type="match status" value="1"/>
</dbReference>
<dbReference type="Pfam" id="PF00899">
    <property type="entry name" value="ThiF"/>
    <property type="match status" value="1"/>
</dbReference>
<dbReference type="SUPFAM" id="SSF69572">
    <property type="entry name" value="Activating enzymes of the ubiquitin-like proteins"/>
    <property type="match status" value="1"/>
</dbReference>
<gene>
    <name type="primary">ATG7</name>
    <name type="ordered locus">YALI0C20119g</name>
</gene>
<proteinExistence type="inferred from homology"/>
<evidence type="ECO:0000250" key="1"/>
<evidence type="ECO:0000305" key="2"/>
<organism>
    <name type="scientific">Yarrowia lipolytica (strain CLIB 122 / E 150)</name>
    <name type="common">Yeast</name>
    <name type="synonym">Candida lipolytica</name>
    <dbReference type="NCBI Taxonomy" id="284591"/>
    <lineage>
        <taxon>Eukaryota</taxon>
        <taxon>Fungi</taxon>
        <taxon>Dikarya</taxon>
        <taxon>Ascomycota</taxon>
        <taxon>Saccharomycotina</taxon>
        <taxon>Dipodascomycetes</taxon>
        <taxon>Dipodascales</taxon>
        <taxon>Dipodascales incertae sedis</taxon>
        <taxon>Yarrowia</taxon>
    </lineage>
</organism>
<feature type="chain" id="PRO_0000212821" description="Ubiquitin-like modifier-activating enzyme ATG7">
    <location>
        <begin position="1"/>
        <end position="598"/>
    </location>
</feature>
<feature type="short sequence motif" description="GXGXXG motif">
    <location>
        <begin position="308"/>
        <end position="313"/>
    </location>
</feature>
<feature type="active site" description="Glycyl thioester intermediate" evidence="1">
    <location>
        <position position="486"/>
    </location>
</feature>
<reference key="1">
    <citation type="journal article" date="2004" name="Nature">
        <title>Genome evolution in yeasts.</title>
        <authorList>
            <person name="Dujon B."/>
            <person name="Sherman D."/>
            <person name="Fischer G."/>
            <person name="Durrens P."/>
            <person name="Casaregola S."/>
            <person name="Lafontaine I."/>
            <person name="de Montigny J."/>
            <person name="Marck C."/>
            <person name="Neuveglise C."/>
            <person name="Talla E."/>
            <person name="Goffard N."/>
            <person name="Frangeul L."/>
            <person name="Aigle M."/>
            <person name="Anthouard V."/>
            <person name="Babour A."/>
            <person name="Barbe V."/>
            <person name="Barnay S."/>
            <person name="Blanchin S."/>
            <person name="Beckerich J.-M."/>
            <person name="Beyne E."/>
            <person name="Bleykasten C."/>
            <person name="Boisrame A."/>
            <person name="Boyer J."/>
            <person name="Cattolico L."/>
            <person name="Confanioleri F."/>
            <person name="de Daruvar A."/>
            <person name="Despons L."/>
            <person name="Fabre E."/>
            <person name="Fairhead C."/>
            <person name="Ferry-Dumazet H."/>
            <person name="Groppi A."/>
            <person name="Hantraye F."/>
            <person name="Hennequin C."/>
            <person name="Jauniaux N."/>
            <person name="Joyet P."/>
            <person name="Kachouri R."/>
            <person name="Kerrest A."/>
            <person name="Koszul R."/>
            <person name="Lemaire M."/>
            <person name="Lesur I."/>
            <person name="Ma L."/>
            <person name="Muller H."/>
            <person name="Nicaud J.-M."/>
            <person name="Nikolski M."/>
            <person name="Oztas S."/>
            <person name="Ozier-Kalogeropoulos O."/>
            <person name="Pellenz S."/>
            <person name="Potier S."/>
            <person name="Richard G.-F."/>
            <person name="Straub M.-L."/>
            <person name="Suleau A."/>
            <person name="Swennen D."/>
            <person name="Tekaia F."/>
            <person name="Wesolowski-Louvel M."/>
            <person name="Westhof E."/>
            <person name="Wirth B."/>
            <person name="Zeniou-Meyer M."/>
            <person name="Zivanovic Y."/>
            <person name="Bolotin-Fukuhara M."/>
            <person name="Thierry A."/>
            <person name="Bouchier C."/>
            <person name="Caudron B."/>
            <person name="Scarpelli C."/>
            <person name="Gaillardin C."/>
            <person name="Weissenbach J."/>
            <person name="Wincker P."/>
            <person name="Souciet J.-L."/>
        </authorList>
    </citation>
    <scope>NUCLEOTIDE SEQUENCE [LARGE SCALE GENOMIC DNA]</scope>
    <source>
        <strain>CLIB 122 / E 150</strain>
    </source>
</reference>
<name>ATG7_YARLI</name>
<keyword id="KW-0072">Autophagy</keyword>
<keyword id="KW-0963">Cytoplasm</keyword>
<keyword id="KW-0653">Protein transport</keyword>
<keyword id="KW-1185">Reference proteome</keyword>
<keyword id="KW-0813">Transport</keyword>
<keyword id="KW-0833">Ubl conjugation pathway</keyword>
<accession>Q6CBC3</accession>